<keyword id="KW-0028">Amino-acid biosynthesis</keyword>
<keyword id="KW-0057">Aromatic amino acid biosynthesis</keyword>
<keyword id="KW-0521">NADP</keyword>
<keyword id="KW-0560">Oxidoreductase</keyword>
<gene>
    <name evidence="1" type="primary">aroE</name>
    <name type="ordered locus">Sbal223_0039</name>
</gene>
<feature type="chain" id="PRO_1000124893" description="Shikimate dehydrogenase (NADP(+))">
    <location>
        <begin position="1"/>
        <end position="282"/>
    </location>
</feature>
<feature type="active site" description="Proton acceptor" evidence="1">
    <location>
        <position position="66"/>
    </location>
</feature>
<feature type="binding site" evidence="1">
    <location>
        <begin position="15"/>
        <end position="17"/>
    </location>
    <ligand>
        <name>shikimate</name>
        <dbReference type="ChEBI" id="CHEBI:36208"/>
    </ligand>
</feature>
<feature type="binding site" evidence="1">
    <location>
        <position position="62"/>
    </location>
    <ligand>
        <name>shikimate</name>
        <dbReference type="ChEBI" id="CHEBI:36208"/>
    </ligand>
</feature>
<feature type="binding site" evidence="1">
    <location>
        <position position="87"/>
    </location>
    <ligand>
        <name>shikimate</name>
        <dbReference type="ChEBI" id="CHEBI:36208"/>
    </ligand>
</feature>
<feature type="binding site" evidence="1">
    <location>
        <position position="103"/>
    </location>
    <ligand>
        <name>shikimate</name>
        <dbReference type="ChEBI" id="CHEBI:36208"/>
    </ligand>
</feature>
<feature type="binding site" evidence="1">
    <location>
        <begin position="127"/>
        <end position="131"/>
    </location>
    <ligand>
        <name>NADP(+)</name>
        <dbReference type="ChEBI" id="CHEBI:58349"/>
    </ligand>
</feature>
<feature type="binding site" evidence="1">
    <location>
        <begin position="151"/>
        <end position="156"/>
    </location>
    <ligand>
        <name>NADP(+)</name>
        <dbReference type="ChEBI" id="CHEBI:58349"/>
    </ligand>
</feature>
<feature type="binding site" evidence="1">
    <location>
        <position position="220"/>
    </location>
    <ligand>
        <name>NADP(+)</name>
        <dbReference type="ChEBI" id="CHEBI:58349"/>
    </ligand>
</feature>
<feature type="binding site" evidence="1">
    <location>
        <position position="222"/>
    </location>
    <ligand>
        <name>shikimate</name>
        <dbReference type="ChEBI" id="CHEBI:36208"/>
    </ligand>
</feature>
<feature type="binding site" evidence="1">
    <location>
        <position position="244"/>
    </location>
    <ligand>
        <name>NADP(+)</name>
        <dbReference type="ChEBI" id="CHEBI:58349"/>
    </ligand>
</feature>
<organism>
    <name type="scientific">Shewanella baltica (strain OS223)</name>
    <dbReference type="NCBI Taxonomy" id="407976"/>
    <lineage>
        <taxon>Bacteria</taxon>
        <taxon>Pseudomonadati</taxon>
        <taxon>Pseudomonadota</taxon>
        <taxon>Gammaproteobacteria</taxon>
        <taxon>Alteromonadales</taxon>
        <taxon>Shewanellaceae</taxon>
        <taxon>Shewanella</taxon>
    </lineage>
</organism>
<comment type="function">
    <text evidence="1">Involved in the biosynthesis of the chorismate, which leads to the biosynthesis of aromatic amino acids. Catalyzes the reversible NADPH linked reduction of 3-dehydroshikimate (DHSA) to yield shikimate (SA).</text>
</comment>
<comment type="catalytic activity">
    <reaction evidence="1">
        <text>shikimate + NADP(+) = 3-dehydroshikimate + NADPH + H(+)</text>
        <dbReference type="Rhea" id="RHEA:17737"/>
        <dbReference type="ChEBI" id="CHEBI:15378"/>
        <dbReference type="ChEBI" id="CHEBI:16630"/>
        <dbReference type="ChEBI" id="CHEBI:36208"/>
        <dbReference type="ChEBI" id="CHEBI:57783"/>
        <dbReference type="ChEBI" id="CHEBI:58349"/>
        <dbReference type="EC" id="1.1.1.25"/>
    </reaction>
</comment>
<comment type="pathway">
    <text evidence="1">Metabolic intermediate biosynthesis; chorismate biosynthesis; chorismate from D-erythrose 4-phosphate and phosphoenolpyruvate: step 4/7.</text>
</comment>
<comment type="subunit">
    <text evidence="1">Homodimer.</text>
</comment>
<comment type="similarity">
    <text evidence="1">Belongs to the shikimate dehydrogenase family.</text>
</comment>
<protein>
    <recommendedName>
        <fullName evidence="1">Shikimate dehydrogenase (NADP(+))</fullName>
        <shortName evidence="1">SDH</shortName>
        <ecNumber evidence="1">1.1.1.25</ecNumber>
    </recommendedName>
</protein>
<name>AROE_SHEB2</name>
<accession>B8E3K9</accession>
<evidence type="ECO:0000255" key="1">
    <source>
        <dbReference type="HAMAP-Rule" id="MF_00222"/>
    </source>
</evidence>
<reference key="1">
    <citation type="submission" date="2008-12" db="EMBL/GenBank/DDBJ databases">
        <title>Complete sequence of chromosome of Shewanella baltica OS223.</title>
        <authorList>
            <consortium name="US DOE Joint Genome Institute"/>
            <person name="Lucas S."/>
            <person name="Copeland A."/>
            <person name="Lapidus A."/>
            <person name="Glavina del Rio T."/>
            <person name="Dalin E."/>
            <person name="Tice H."/>
            <person name="Bruce D."/>
            <person name="Goodwin L."/>
            <person name="Pitluck S."/>
            <person name="Chertkov O."/>
            <person name="Meincke L."/>
            <person name="Brettin T."/>
            <person name="Detter J.C."/>
            <person name="Han C."/>
            <person name="Kuske C.R."/>
            <person name="Larimer F."/>
            <person name="Land M."/>
            <person name="Hauser L."/>
            <person name="Kyrpides N."/>
            <person name="Ovchinnikova G."/>
            <person name="Brettar I."/>
            <person name="Rodrigues J."/>
            <person name="Konstantinidis K."/>
            <person name="Tiedje J."/>
        </authorList>
    </citation>
    <scope>NUCLEOTIDE SEQUENCE [LARGE SCALE GENOMIC DNA]</scope>
    <source>
        <strain>OS223</strain>
    </source>
</reference>
<proteinExistence type="inferred from homology"/>
<dbReference type="EC" id="1.1.1.25" evidence="1"/>
<dbReference type="EMBL" id="CP001252">
    <property type="protein sequence ID" value="ACK44583.1"/>
    <property type="molecule type" value="Genomic_DNA"/>
</dbReference>
<dbReference type="RefSeq" id="WP_012586349.1">
    <property type="nucleotide sequence ID" value="NC_011663.1"/>
</dbReference>
<dbReference type="SMR" id="B8E3K9"/>
<dbReference type="KEGG" id="sbp:Sbal223_0039"/>
<dbReference type="HOGENOM" id="CLU_044063_2_1_6"/>
<dbReference type="UniPathway" id="UPA00053">
    <property type="reaction ID" value="UER00087"/>
</dbReference>
<dbReference type="Proteomes" id="UP000002507">
    <property type="component" value="Chromosome"/>
</dbReference>
<dbReference type="GO" id="GO:0005829">
    <property type="term" value="C:cytosol"/>
    <property type="evidence" value="ECO:0007669"/>
    <property type="project" value="TreeGrafter"/>
</dbReference>
<dbReference type="GO" id="GO:0050661">
    <property type="term" value="F:NADP binding"/>
    <property type="evidence" value="ECO:0007669"/>
    <property type="project" value="InterPro"/>
</dbReference>
<dbReference type="GO" id="GO:0004764">
    <property type="term" value="F:shikimate 3-dehydrogenase (NADP+) activity"/>
    <property type="evidence" value="ECO:0007669"/>
    <property type="project" value="UniProtKB-UniRule"/>
</dbReference>
<dbReference type="GO" id="GO:0008652">
    <property type="term" value="P:amino acid biosynthetic process"/>
    <property type="evidence" value="ECO:0007669"/>
    <property type="project" value="UniProtKB-KW"/>
</dbReference>
<dbReference type="GO" id="GO:0009073">
    <property type="term" value="P:aromatic amino acid family biosynthetic process"/>
    <property type="evidence" value="ECO:0007669"/>
    <property type="project" value="UniProtKB-KW"/>
</dbReference>
<dbReference type="GO" id="GO:0009423">
    <property type="term" value="P:chorismate biosynthetic process"/>
    <property type="evidence" value="ECO:0007669"/>
    <property type="project" value="UniProtKB-UniRule"/>
</dbReference>
<dbReference type="GO" id="GO:0019632">
    <property type="term" value="P:shikimate metabolic process"/>
    <property type="evidence" value="ECO:0007669"/>
    <property type="project" value="InterPro"/>
</dbReference>
<dbReference type="CDD" id="cd01065">
    <property type="entry name" value="NAD_bind_Shikimate_DH"/>
    <property type="match status" value="1"/>
</dbReference>
<dbReference type="FunFam" id="3.40.50.10860:FF:000006">
    <property type="entry name" value="Shikimate dehydrogenase (NADP(+))"/>
    <property type="match status" value="1"/>
</dbReference>
<dbReference type="FunFam" id="3.40.50.720:FF:000104">
    <property type="entry name" value="Shikimate dehydrogenase (NADP(+))"/>
    <property type="match status" value="1"/>
</dbReference>
<dbReference type="Gene3D" id="3.40.50.10860">
    <property type="entry name" value="Leucine Dehydrogenase, chain A, domain 1"/>
    <property type="match status" value="1"/>
</dbReference>
<dbReference type="Gene3D" id="3.40.50.720">
    <property type="entry name" value="NAD(P)-binding Rossmann-like Domain"/>
    <property type="match status" value="1"/>
</dbReference>
<dbReference type="HAMAP" id="MF_00222">
    <property type="entry name" value="Shikimate_DH_AroE"/>
    <property type="match status" value="1"/>
</dbReference>
<dbReference type="InterPro" id="IPR046346">
    <property type="entry name" value="Aminoacid_DH-like_N_sf"/>
</dbReference>
<dbReference type="InterPro" id="IPR036291">
    <property type="entry name" value="NAD(P)-bd_dom_sf"/>
</dbReference>
<dbReference type="InterPro" id="IPR041121">
    <property type="entry name" value="SDH_C"/>
</dbReference>
<dbReference type="InterPro" id="IPR011342">
    <property type="entry name" value="Shikimate_DH"/>
</dbReference>
<dbReference type="InterPro" id="IPR013708">
    <property type="entry name" value="Shikimate_DH-bd_N"/>
</dbReference>
<dbReference type="InterPro" id="IPR022893">
    <property type="entry name" value="Shikimate_DH_fam"/>
</dbReference>
<dbReference type="InterPro" id="IPR006151">
    <property type="entry name" value="Shikm_DH/Glu-tRNA_Rdtase"/>
</dbReference>
<dbReference type="NCBIfam" id="TIGR00507">
    <property type="entry name" value="aroE"/>
    <property type="match status" value="1"/>
</dbReference>
<dbReference type="NCBIfam" id="NF001310">
    <property type="entry name" value="PRK00258.1-2"/>
    <property type="match status" value="1"/>
</dbReference>
<dbReference type="PANTHER" id="PTHR21089:SF1">
    <property type="entry name" value="BIFUNCTIONAL 3-DEHYDROQUINATE DEHYDRATASE_SHIKIMATE DEHYDROGENASE, CHLOROPLASTIC"/>
    <property type="match status" value="1"/>
</dbReference>
<dbReference type="PANTHER" id="PTHR21089">
    <property type="entry name" value="SHIKIMATE DEHYDROGENASE"/>
    <property type="match status" value="1"/>
</dbReference>
<dbReference type="Pfam" id="PF18317">
    <property type="entry name" value="SDH_C"/>
    <property type="match status" value="1"/>
</dbReference>
<dbReference type="Pfam" id="PF01488">
    <property type="entry name" value="Shikimate_DH"/>
    <property type="match status" value="1"/>
</dbReference>
<dbReference type="Pfam" id="PF08501">
    <property type="entry name" value="Shikimate_dh_N"/>
    <property type="match status" value="1"/>
</dbReference>
<dbReference type="SUPFAM" id="SSF53223">
    <property type="entry name" value="Aminoacid dehydrogenase-like, N-terminal domain"/>
    <property type="match status" value="1"/>
</dbReference>
<dbReference type="SUPFAM" id="SSF51735">
    <property type="entry name" value="NAD(P)-binding Rossmann-fold domains"/>
    <property type="match status" value="1"/>
</dbReference>
<sequence length="282" mass="29602">MTDRYAVFGNPISHSKSPFIHGQFAAPTQESLTYEAILAPVDGFEASLTAFFNAGGKGANVTVPFKEQAFALCDSISPEAKLAGAVNTLSLLADGTIRGDNTDGLGLVADLIANLGSLQDQRVLLIGAGGAARGCILPLLNAEIAQLTISNRTHTKAQLLVDIFTSVDNGAYASKVTAVEMSELAGEFDIIINSTSASLAGELPPLPAHIITTQTVCYDMMYGASITAFNQWALSQGAAKVIDGLGMLVGQAAKSFTLWRGIEPDTQVVLTLLRDKLMAEPK</sequence>